<proteinExistence type="inferred from homology"/>
<reference key="1">
    <citation type="journal article" date="2004" name="J. Infect. Dis.">
        <title>Progress toward characterization of the group A Streptococcus metagenome: complete genome sequence of a macrolide-resistant serotype M6 strain.</title>
        <authorList>
            <person name="Banks D.J."/>
            <person name="Porcella S.F."/>
            <person name="Barbian K.D."/>
            <person name="Beres S.B."/>
            <person name="Philips L.E."/>
            <person name="Voyich J.M."/>
            <person name="DeLeo F.R."/>
            <person name="Martin J.M."/>
            <person name="Somerville G.A."/>
            <person name="Musser J.M."/>
        </authorList>
    </citation>
    <scope>NUCLEOTIDE SEQUENCE [LARGE SCALE GENOMIC DNA]</scope>
    <source>
        <strain>ATCC BAA-946 / MGAS10394</strain>
    </source>
</reference>
<dbReference type="EMBL" id="CP000003">
    <property type="protein sequence ID" value="AAT87029.1"/>
    <property type="molecule type" value="Genomic_DNA"/>
</dbReference>
<dbReference type="RefSeq" id="WP_010922328.1">
    <property type="nucleotide sequence ID" value="NC_006086.1"/>
</dbReference>
<dbReference type="SMR" id="Q5XC34"/>
<dbReference type="KEGG" id="spa:M6_Spy0894"/>
<dbReference type="HOGENOM" id="CLU_158489_0_0_9"/>
<dbReference type="Proteomes" id="UP000001167">
    <property type="component" value="Chromosome"/>
</dbReference>
<dbReference type="GO" id="GO:0005737">
    <property type="term" value="C:cytoplasm"/>
    <property type="evidence" value="ECO:0007669"/>
    <property type="project" value="UniProtKB-SubCell"/>
</dbReference>
<dbReference type="HAMAP" id="MF_00805">
    <property type="entry name" value="CitD"/>
    <property type="match status" value="1"/>
</dbReference>
<dbReference type="InterPro" id="IPR006495">
    <property type="entry name" value="CitD"/>
</dbReference>
<dbReference type="InterPro" id="IPR023439">
    <property type="entry name" value="Mal_deCO2ase/Cit_lyase_ACP"/>
</dbReference>
<dbReference type="NCBIfam" id="TIGR01608">
    <property type="entry name" value="citD"/>
    <property type="match status" value="1"/>
</dbReference>
<dbReference type="NCBIfam" id="NF009726">
    <property type="entry name" value="PRK13253.1"/>
    <property type="match status" value="1"/>
</dbReference>
<dbReference type="Pfam" id="PF06857">
    <property type="entry name" value="ACP"/>
    <property type="match status" value="1"/>
</dbReference>
<dbReference type="PIRSF" id="PIRSF002736">
    <property type="entry name" value="Citrt_lyas_gamma"/>
    <property type="match status" value="1"/>
</dbReference>
<protein>
    <recommendedName>
        <fullName evidence="1">Citrate lyase acyl carrier protein</fullName>
    </recommendedName>
    <alternativeName>
        <fullName evidence="1">Citrate lyase gamma chain</fullName>
    </alternativeName>
</protein>
<keyword id="KW-0963">Cytoplasm</keyword>
<keyword id="KW-0597">Phosphoprotein</keyword>
<organism>
    <name type="scientific">Streptococcus pyogenes serotype M6 (strain ATCC BAA-946 / MGAS10394)</name>
    <dbReference type="NCBI Taxonomy" id="286636"/>
    <lineage>
        <taxon>Bacteria</taxon>
        <taxon>Bacillati</taxon>
        <taxon>Bacillota</taxon>
        <taxon>Bacilli</taxon>
        <taxon>Lactobacillales</taxon>
        <taxon>Streptococcaceae</taxon>
        <taxon>Streptococcus</taxon>
    </lineage>
</organism>
<evidence type="ECO:0000255" key="1">
    <source>
        <dbReference type="HAMAP-Rule" id="MF_00805"/>
    </source>
</evidence>
<comment type="function">
    <text evidence="1">Covalent carrier of the coenzyme of citrate lyase.</text>
</comment>
<comment type="subunit">
    <text evidence="1">Oligomer with a subunit composition of (alpha,beta,gamma)6.</text>
</comment>
<comment type="subcellular location">
    <subcellularLocation>
        <location evidence="1">Cytoplasm</location>
    </subcellularLocation>
</comment>
<comment type="similarity">
    <text evidence="1">Belongs to the CitD family.</text>
</comment>
<feature type="chain" id="PRO_0000214715" description="Citrate lyase acyl carrier protein">
    <location>
        <begin position="1"/>
        <end position="102"/>
    </location>
</feature>
<feature type="modified residue" description="O-(phosphoribosyl dephospho-coenzyme A)serine" evidence="1">
    <location>
        <position position="14"/>
    </location>
</feature>
<gene>
    <name evidence="1" type="primary">citD</name>
    <name type="ordered locus">M6_Spy0894</name>
</gene>
<accession>Q5XC34</accession>
<sequence>MDIKQTAVAGSLESSDLMITVSPNDEQTITITLDSSVEKQFGNHIRQLIHQTLVNLKVTAAKVEAVDKGALDCTIQARTIAAVHRAAGIDQYDWKEIDSWNV</sequence>
<name>CITD_STRP6</name>